<keyword id="KW-0067">ATP-binding</keyword>
<keyword id="KW-0238">DNA-binding</keyword>
<keyword id="KW-0479">Metal-binding</keyword>
<keyword id="KW-0547">Nucleotide-binding</keyword>
<keyword id="KW-0678">Repressor</keyword>
<keyword id="KW-0804">Transcription</keyword>
<keyword id="KW-0805">Transcription regulation</keyword>
<keyword id="KW-0862">Zinc</keyword>
<keyword id="KW-0863">Zinc-finger</keyword>
<accession>A8GAN5</accession>
<evidence type="ECO:0000255" key="1">
    <source>
        <dbReference type="HAMAP-Rule" id="MF_00440"/>
    </source>
</evidence>
<comment type="function">
    <text evidence="1">Negatively regulates transcription of bacterial ribonucleotide reductase nrd genes and operons by binding to NrdR-boxes.</text>
</comment>
<comment type="cofactor">
    <cofactor evidence="1">
        <name>Zn(2+)</name>
        <dbReference type="ChEBI" id="CHEBI:29105"/>
    </cofactor>
    <text evidence="1">Binds 1 zinc ion.</text>
</comment>
<comment type="similarity">
    <text evidence="1">Belongs to the NrdR family.</text>
</comment>
<reference key="1">
    <citation type="submission" date="2007-09" db="EMBL/GenBank/DDBJ databases">
        <title>Complete sequence of chromosome of Serratia proteamaculans 568.</title>
        <authorList>
            <consortium name="US DOE Joint Genome Institute"/>
            <person name="Copeland A."/>
            <person name="Lucas S."/>
            <person name="Lapidus A."/>
            <person name="Barry K."/>
            <person name="Glavina del Rio T."/>
            <person name="Dalin E."/>
            <person name="Tice H."/>
            <person name="Pitluck S."/>
            <person name="Chain P."/>
            <person name="Malfatti S."/>
            <person name="Shin M."/>
            <person name="Vergez L."/>
            <person name="Schmutz J."/>
            <person name="Larimer F."/>
            <person name="Land M."/>
            <person name="Hauser L."/>
            <person name="Kyrpides N."/>
            <person name="Kim E."/>
            <person name="Taghavi S."/>
            <person name="Newman L."/>
            <person name="Vangronsveld J."/>
            <person name="van der Lelie D."/>
            <person name="Richardson P."/>
        </authorList>
    </citation>
    <scope>NUCLEOTIDE SEQUENCE [LARGE SCALE GENOMIC DNA]</scope>
    <source>
        <strain>568</strain>
    </source>
</reference>
<sequence>MHCPFCAAVDTKVIDSRLVGDGSQVRRRRQCLVCNERFTTFEVAELVMPRVIKSDEVREPFNEDKLRRGMLKALEKRPVSSDDVENAINHIKSQLRATGEREVPTKLVGNLVMDALKKLDKVAYIRFASVYRSFEDIREFGEEIARLQD</sequence>
<dbReference type="EMBL" id="CP000826">
    <property type="protein sequence ID" value="ABV40175.1"/>
    <property type="molecule type" value="Genomic_DNA"/>
</dbReference>
<dbReference type="SMR" id="A8GAN5"/>
<dbReference type="STRING" id="399741.Spro_1071"/>
<dbReference type="KEGG" id="spe:Spro_1071"/>
<dbReference type="eggNOG" id="COG1327">
    <property type="taxonomic scope" value="Bacteria"/>
</dbReference>
<dbReference type="HOGENOM" id="CLU_108412_0_0_6"/>
<dbReference type="OrthoDB" id="9807461at2"/>
<dbReference type="GO" id="GO:0005524">
    <property type="term" value="F:ATP binding"/>
    <property type="evidence" value="ECO:0007669"/>
    <property type="project" value="UniProtKB-KW"/>
</dbReference>
<dbReference type="GO" id="GO:0003677">
    <property type="term" value="F:DNA binding"/>
    <property type="evidence" value="ECO:0007669"/>
    <property type="project" value="UniProtKB-KW"/>
</dbReference>
<dbReference type="GO" id="GO:0008270">
    <property type="term" value="F:zinc ion binding"/>
    <property type="evidence" value="ECO:0007669"/>
    <property type="project" value="UniProtKB-UniRule"/>
</dbReference>
<dbReference type="GO" id="GO:0045892">
    <property type="term" value="P:negative regulation of DNA-templated transcription"/>
    <property type="evidence" value="ECO:0007669"/>
    <property type="project" value="UniProtKB-UniRule"/>
</dbReference>
<dbReference type="HAMAP" id="MF_00440">
    <property type="entry name" value="NrdR"/>
    <property type="match status" value="1"/>
</dbReference>
<dbReference type="InterPro" id="IPR005144">
    <property type="entry name" value="ATP-cone_dom"/>
</dbReference>
<dbReference type="InterPro" id="IPR055173">
    <property type="entry name" value="NrdR-like_N"/>
</dbReference>
<dbReference type="InterPro" id="IPR003796">
    <property type="entry name" value="RNR_NrdR-like"/>
</dbReference>
<dbReference type="NCBIfam" id="TIGR00244">
    <property type="entry name" value="transcriptional regulator NrdR"/>
    <property type="match status" value="1"/>
</dbReference>
<dbReference type="PANTHER" id="PTHR30455">
    <property type="entry name" value="TRANSCRIPTIONAL REPRESSOR NRDR"/>
    <property type="match status" value="1"/>
</dbReference>
<dbReference type="PANTHER" id="PTHR30455:SF2">
    <property type="entry name" value="TRANSCRIPTIONAL REPRESSOR NRDR"/>
    <property type="match status" value="1"/>
</dbReference>
<dbReference type="Pfam" id="PF03477">
    <property type="entry name" value="ATP-cone"/>
    <property type="match status" value="1"/>
</dbReference>
<dbReference type="Pfam" id="PF22811">
    <property type="entry name" value="Zn_ribbon_NrdR"/>
    <property type="match status" value="1"/>
</dbReference>
<dbReference type="PROSITE" id="PS51161">
    <property type="entry name" value="ATP_CONE"/>
    <property type="match status" value="1"/>
</dbReference>
<gene>
    <name evidence="1" type="primary">nrdR</name>
    <name type="ordered locus">Spro_1071</name>
</gene>
<organism>
    <name type="scientific">Serratia proteamaculans (strain 568)</name>
    <dbReference type="NCBI Taxonomy" id="399741"/>
    <lineage>
        <taxon>Bacteria</taxon>
        <taxon>Pseudomonadati</taxon>
        <taxon>Pseudomonadota</taxon>
        <taxon>Gammaproteobacteria</taxon>
        <taxon>Enterobacterales</taxon>
        <taxon>Yersiniaceae</taxon>
        <taxon>Serratia</taxon>
    </lineage>
</organism>
<name>NRDR_SERP5</name>
<protein>
    <recommendedName>
        <fullName evidence="1">Transcriptional repressor NrdR</fullName>
    </recommendedName>
</protein>
<proteinExistence type="inferred from homology"/>
<feature type="chain" id="PRO_1000080820" description="Transcriptional repressor NrdR">
    <location>
        <begin position="1"/>
        <end position="149"/>
    </location>
</feature>
<feature type="domain" description="ATP-cone" evidence="1">
    <location>
        <begin position="49"/>
        <end position="139"/>
    </location>
</feature>
<feature type="zinc finger region" evidence="1">
    <location>
        <begin position="3"/>
        <end position="34"/>
    </location>
</feature>